<comment type="function">
    <text evidence="1">Binds directly to 23S rRNA. The L1 stalk is quite mobile in the ribosome, and is involved in E site tRNA release.</text>
</comment>
<comment type="function">
    <text evidence="1">Protein L1 is also a translational repressor protein, it controls the translation of the L11 operon by binding to its mRNA.</text>
</comment>
<comment type="subunit">
    <text evidence="1">Part of the 50S ribosomal subunit.</text>
</comment>
<comment type="similarity">
    <text evidence="1">Belongs to the universal ribosomal protein uL1 family.</text>
</comment>
<keyword id="KW-1185">Reference proteome</keyword>
<keyword id="KW-0678">Repressor</keyword>
<keyword id="KW-0687">Ribonucleoprotein</keyword>
<keyword id="KW-0689">Ribosomal protein</keyword>
<keyword id="KW-0694">RNA-binding</keyword>
<keyword id="KW-0699">rRNA-binding</keyword>
<keyword id="KW-0810">Translation regulation</keyword>
<keyword id="KW-0820">tRNA-binding</keyword>
<proteinExistence type="inferred from homology"/>
<reference key="1">
    <citation type="journal article" date="2007" name="PLoS Biol.">
        <title>Evolution of symbiotic bacteria in the distal human intestine.</title>
        <authorList>
            <person name="Xu J."/>
            <person name="Mahowald M.A."/>
            <person name="Ley R.E."/>
            <person name="Lozupone C.A."/>
            <person name="Hamady M."/>
            <person name="Martens E.C."/>
            <person name="Henrissat B."/>
            <person name="Coutinho P.M."/>
            <person name="Minx P."/>
            <person name="Latreille P."/>
            <person name="Cordum H."/>
            <person name="Van Brunt A."/>
            <person name="Kim K."/>
            <person name="Fulton R.S."/>
            <person name="Fulton L.A."/>
            <person name="Clifton S.W."/>
            <person name="Wilson R.K."/>
            <person name="Knight R.D."/>
            <person name="Gordon J.I."/>
        </authorList>
    </citation>
    <scope>NUCLEOTIDE SEQUENCE [LARGE SCALE GENOMIC DNA]</scope>
    <source>
        <strain>ATCC 8503 / DSM 20701 / CIP 104284 / JCM 5825 / NCTC 11152</strain>
    </source>
</reference>
<accession>A6LE84</accession>
<organism>
    <name type="scientific">Parabacteroides distasonis (strain ATCC 8503 / DSM 20701 / CIP 104284 / JCM 5825 / NCTC 11152)</name>
    <dbReference type="NCBI Taxonomy" id="435591"/>
    <lineage>
        <taxon>Bacteria</taxon>
        <taxon>Pseudomonadati</taxon>
        <taxon>Bacteroidota</taxon>
        <taxon>Bacteroidia</taxon>
        <taxon>Bacteroidales</taxon>
        <taxon>Tannerellaceae</taxon>
        <taxon>Parabacteroides</taxon>
    </lineage>
</organism>
<gene>
    <name evidence="1" type="primary">rplA</name>
    <name type="ordered locus">BDI_2267</name>
</gene>
<feature type="chain" id="PRO_0000308065" description="Large ribosomal subunit protein uL1">
    <location>
        <begin position="1"/>
        <end position="232"/>
    </location>
</feature>
<sequence length="232" mass="24770">MSKLTKNQKLALGKIEAGKAYTLKEASALVKEITTTKFDASVDVDVRLGVDPRKANQMVRGVVSLPHGTGKQVRVLALCTPDKEAEATAAGADYVGLDEYINKIKGGWTDIDVIITMPSIMGKIGALGRVLGPRGLMPNPKSGTVTNEIGNAVKEVKQGKIDFKVDKSGIVHTSVGKVSFTPEQIRDNAKEFISTLIKLKPTAAKGAYIKSIYLSSTMSAGIKIDPKSVEEN</sequence>
<dbReference type="EMBL" id="CP000140">
    <property type="protein sequence ID" value="ABR43998.1"/>
    <property type="molecule type" value="Genomic_DNA"/>
</dbReference>
<dbReference type="RefSeq" id="WP_005854218.1">
    <property type="nucleotide sequence ID" value="NZ_LR215978.1"/>
</dbReference>
<dbReference type="SMR" id="A6LE84"/>
<dbReference type="STRING" id="435591.BDI_2267"/>
<dbReference type="PaxDb" id="435591-BDI_2267"/>
<dbReference type="GeneID" id="93522266"/>
<dbReference type="KEGG" id="pdi:BDI_2267"/>
<dbReference type="eggNOG" id="COG0081">
    <property type="taxonomic scope" value="Bacteria"/>
</dbReference>
<dbReference type="HOGENOM" id="CLU_062853_0_0_10"/>
<dbReference type="BioCyc" id="PDIS435591:G1G5A-2330-MONOMER"/>
<dbReference type="Proteomes" id="UP000000566">
    <property type="component" value="Chromosome"/>
</dbReference>
<dbReference type="GO" id="GO:0015934">
    <property type="term" value="C:large ribosomal subunit"/>
    <property type="evidence" value="ECO:0007669"/>
    <property type="project" value="InterPro"/>
</dbReference>
<dbReference type="GO" id="GO:0019843">
    <property type="term" value="F:rRNA binding"/>
    <property type="evidence" value="ECO:0007669"/>
    <property type="project" value="UniProtKB-UniRule"/>
</dbReference>
<dbReference type="GO" id="GO:0003735">
    <property type="term" value="F:structural constituent of ribosome"/>
    <property type="evidence" value="ECO:0007669"/>
    <property type="project" value="InterPro"/>
</dbReference>
<dbReference type="GO" id="GO:0000049">
    <property type="term" value="F:tRNA binding"/>
    <property type="evidence" value="ECO:0007669"/>
    <property type="project" value="UniProtKB-KW"/>
</dbReference>
<dbReference type="GO" id="GO:0006417">
    <property type="term" value="P:regulation of translation"/>
    <property type="evidence" value="ECO:0007669"/>
    <property type="project" value="UniProtKB-KW"/>
</dbReference>
<dbReference type="GO" id="GO:0006412">
    <property type="term" value="P:translation"/>
    <property type="evidence" value="ECO:0007669"/>
    <property type="project" value="UniProtKB-UniRule"/>
</dbReference>
<dbReference type="CDD" id="cd00403">
    <property type="entry name" value="Ribosomal_L1"/>
    <property type="match status" value="1"/>
</dbReference>
<dbReference type="FunFam" id="3.40.50.790:FF:000001">
    <property type="entry name" value="50S ribosomal protein L1"/>
    <property type="match status" value="1"/>
</dbReference>
<dbReference type="Gene3D" id="3.30.190.20">
    <property type="match status" value="1"/>
</dbReference>
<dbReference type="Gene3D" id="3.40.50.790">
    <property type="match status" value="1"/>
</dbReference>
<dbReference type="HAMAP" id="MF_01318_B">
    <property type="entry name" value="Ribosomal_uL1_B"/>
    <property type="match status" value="1"/>
</dbReference>
<dbReference type="InterPro" id="IPR005878">
    <property type="entry name" value="Ribosom_uL1_bac-type"/>
</dbReference>
<dbReference type="InterPro" id="IPR002143">
    <property type="entry name" value="Ribosomal_uL1"/>
</dbReference>
<dbReference type="InterPro" id="IPR023674">
    <property type="entry name" value="Ribosomal_uL1-like"/>
</dbReference>
<dbReference type="InterPro" id="IPR028364">
    <property type="entry name" value="Ribosomal_uL1/biogenesis"/>
</dbReference>
<dbReference type="InterPro" id="IPR016095">
    <property type="entry name" value="Ribosomal_uL1_3-a/b-sand"/>
</dbReference>
<dbReference type="InterPro" id="IPR023673">
    <property type="entry name" value="Ribosomal_uL1_CS"/>
</dbReference>
<dbReference type="NCBIfam" id="TIGR01169">
    <property type="entry name" value="rplA_bact"/>
    <property type="match status" value="1"/>
</dbReference>
<dbReference type="PANTHER" id="PTHR36427">
    <property type="entry name" value="54S RIBOSOMAL PROTEIN L1, MITOCHONDRIAL"/>
    <property type="match status" value="1"/>
</dbReference>
<dbReference type="PANTHER" id="PTHR36427:SF3">
    <property type="entry name" value="LARGE RIBOSOMAL SUBUNIT PROTEIN UL1M"/>
    <property type="match status" value="1"/>
</dbReference>
<dbReference type="Pfam" id="PF00687">
    <property type="entry name" value="Ribosomal_L1"/>
    <property type="match status" value="1"/>
</dbReference>
<dbReference type="PIRSF" id="PIRSF002155">
    <property type="entry name" value="Ribosomal_L1"/>
    <property type="match status" value="1"/>
</dbReference>
<dbReference type="SUPFAM" id="SSF56808">
    <property type="entry name" value="Ribosomal protein L1"/>
    <property type="match status" value="1"/>
</dbReference>
<dbReference type="PROSITE" id="PS01199">
    <property type="entry name" value="RIBOSOMAL_L1"/>
    <property type="match status" value="1"/>
</dbReference>
<name>RL1_PARD8</name>
<protein>
    <recommendedName>
        <fullName evidence="1">Large ribosomal subunit protein uL1</fullName>
    </recommendedName>
    <alternativeName>
        <fullName evidence="2">50S ribosomal protein L1</fullName>
    </alternativeName>
</protein>
<evidence type="ECO:0000255" key="1">
    <source>
        <dbReference type="HAMAP-Rule" id="MF_01318"/>
    </source>
</evidence>
<evidence type="ECO:0000305" key="2"/>